<name>TSAD_PSESM</name>
<proteinExistence type="inferred from homology"/>
<sequence length="341" mass="36437">MLVLGLETSCDETGVALYDSERGLLADALFSQIDLHRAYGGVVPELASRDHVKRMLPLIRQTLAEADCVATDIDAIAYTAGPGLVGALLVGASCAQALAFAWDIPALGVHHMEGHLLAPMLEENPPQFPFVALLVSGGHTQLVRVDGIGQYELLGETLDDAAGEAFDKTAKMMGMQYPGGPEISKAALQGVPGRFVFPRPMTDRPGLAFSFSGLKTSALNTWQQCQSAGDDSEQTRCDIALAFQQAVVETLTIKCKRALKQTGLKSLVIAGGVSANKALRVSLESMLGELRGHVYYARPEFCTDNGAMIAFAGCQRLQAGQKEDLSISVQARWPMEQLSGL</sequence>
<dbReference type="EC" id="2.3.1.234" evidence="1"/>
<dbReference type="EMBL" id="AE016853">
    <property type="protein sequence ID" value="AAO54082.1"/>
    <property type="molecule type" value="Genomic_DNA"/>
</dbReference>
<dbReference type="RefSeq" id="NP_790387.1">
    <property type="nucleotide sequence ID" value="NC_004578.1"/>
</dbReference>
<dbReference type="RefSeq" id="WP_005614128.1">
    <property type="nucleotide sequence ID" value="NC_004578.1"/>
</dbReference>
<dbReference type="SMR" id="Q88A57"/>
<dbReference type="STRING" id="223283.PSPTO_0540"/>
<dbReference type="GeneID" id="1182150"/>
<dbReference type="KEGG" id="pst:PSPTO_0540"/>
<dbReference type="PATRIC" id="fig|223283.9.peg.550"/>
<dbReference type="eggNOG" id="COG0533">
    <property type="taxonomic scope" value="Bacteria"/>
</dbReference>
<dbReference type="HOGENOM" id="CLU_023208_0_2_6"/>
<dbReference type="OrthoDB" id="9806197at2"/>
<dbReference type="PhylomeDB" id="Q88A57"/>
<dbReference type="Proteomes" id="UP000002515">
    <property type="component" value="Chromosome"/>
</dbReference>
<dbReference type="GO" id="GO:0005737">
    <property type="term" value="C:cytoplasm"/>
    <property type="evidence" value="ECO:0007669"/>
    <property type="project" value="UniProtKB-SubCell"/>
</dbReference>
<dbReference type="GO" id="GO:0005506">
    <property type="term" value="F:iron ion binding"/>
    <property type="evidence" value="ECO:0007669"/>
    <property type="project" value="UniProtKB-UniRule"/>
</dbReference>
<dbReference type="GO" id="GO:0061711">
    <property type="term" value="F:N(6)-L-threonylcarbamoyladenine synthase activity"/>
    <property type="evidence" value="ECO:0007669"/>
    <property type="project" value="UniProtKB-EC"/>
</dbReference>
<dbReference type="GO" id="GO:0002949">
    <property type="term" value="P:tRNA threonylcarbamoyladenosine modification"/>
    <property type="evidence" value="ECO:0007669"/>
    <property type="project" value="UniProtKB-UniRule"/>
</dbReference>
<dbReference type="CDD" id="cd24133">
    <property type="entry name" value="ASKHA_NBD_TsaD_bac"/>
    <property type="match status" value="1"/>
</dbReference>
<dbReference type="FunFam" id="3.30.420.40:FF:000012">
    <property type="entry name" value="tRNA N6-adenosine threonylcarbamoyltransferase"/>
    <property type="match status" value="1"/>
</dbReference>
<dbReference type="FunFam" id="3.30.420.40:FF:000031">
    <property type="entry name" value="tRNA N6-adenosine threonylcarbamoyltransferase"/>
    <property type="match status" value="1"/>
</dbReference>
<dbReference type="Gene3D" id="3.30.420.40">
    <property type="match status" value="2"/>
</dbReference>
<dbReference type="HAMAP" id="MF_01445">
    <property type="entry name" value="TsaD"/>
    <property type="match status" value="1"/>
</dbReference>
<dbReference type="InterPro" id="IPR043129">
    <property type="entry name" value="ATPase_NBD"/>
</dbReference>
<dbReference type="InterPro" id="IPR000905">
    <property type="entry name" value="Gcp-like_dom"/>
</dbReference>
<dbReference type="InterPro" id="IPR017861">
    <property type="entry name" value="KAE1/TsaD"/>
</dbReference>
<dbReference type="InterPro" id="IPR022450">
    <property type="entry name" value="TsaD"/>
</dbReference>
<dbReference type="NCBIfam" id="TIGR00329">
    <property type="entry name" value="gcp_kae1"/>
    <property type="match status" value="1"/>
</dbReference>
<dbReference type="NCBIfam" id="TIGR03723">
    <property type="entry name" value="T6A_TsaD_YgjD"/>
    <property type="match status" value="1"/>
</dbReference>
<dbReference type="PANTHER" id="PTHR11735">
    <property type="entry name" value="TRNA N6-ADENOSINE THREONYLCARBAMOYLTRANSFERASE"/>
    <property type="match status" value="1"/>
</dbReference>
<dbReference type="PANTHER" id="PTHR11735:SF6">
    <property type="entry name" value="TRNA N6-ADENOSINE THREONYLCARBAMOYLTRANSFERASE, MITOCHONDRIAL"/>
    <property type="match status" value="1"/>
</dbReference>
<dbReference type="Pfam" id="PF00814">
    <property type="entry name" value="TsaD"/>
    <property type="match status" value="1"/>
</dbReference>
<dbReference type="PRINTS" id="PR00789">
    <property type="entry name" value="OSIALOPTASE"/>
</dbReference>
<dbReference type="SUPFAM" id="SSF53067">
    <property type="entry name" value="Actin-like ATPase domain"/>
    <property type="match status" value="2"/>
</dbReference>
<evidence type="ECO:0000255" key="1">
    <source>
        <dbReference type="HAMAP-Rule" id="MF_01445"/>
    </source>
</evidence>
<keyword id="KW-0012">Acyltransferase</keyword>
<keyword id="KW-0963">Cytoplasm</keyword>
<keyword id="KW-0408">Iron</keyword>
<keyword id="KW-0479">Metal-binding</keyword>
<keyword id="KW-1185">Reference proteome</keyword>
<keyword id="KW-0808">Transferase</keyword>
<keyword id="KW-0819">tRNA processing</keyword>
<gene>
    <name evidence="1" type="primary">tsaD</name>
    <name type="synonym">gcp</name>
    <name type="ordered locus">PSPTO_0540</name>
</gene>
<feature type="chain" id="PRO_0000303499" description="tRNA N6-adenosine threonylcarbamoyltransferase">
    <location>
        <begin position="1"/>
        <end position="341"/>
    </location>
</feature>
<feature type="binding site" evidence="1">
    <location>
        <position position="111"/>
    </location>
    <ligand>
        <name>Fe cation</name>
        <dbReference type="ChEBI" id="CHEBI:24875"/>
    </ligand>
</feature>
<feature type="binding site" evidence="1">
    <location>
        <position position="115"/>
    </location>
    <ligand>
        <name>Fe cation</name>
        <dbReference type="ChEBI" id="CHEBI:24875"/>
    </ligand>
</feature>
<feature type="binding site" evidence="1">
    <location>
        <begin position="134"/>
        <end position="138"/>
    </location>
    <ligand>
        <name>substrate</name>
    </ligand>
</feature>
<feature type="binding site" evidence="1">
    <location>
        <position position="167"/>
    </location>
    <ligand>
        <name>substrate</name>
    </ligand>
</feature>
<feature type="binding site" evidence="1">
    <location>
        <position position="180"/>
    </location>
    <ligand>
        <name>substrate</name>
    </ligand>
</feature>
<feature type="binding site" evidence="1">
    <location>
        <position position="276"/>
    </location>
    <ligand>
        <name>substrate</name>
    </ligand>
</feature>
<feature type="binding site" evidence="1">
    <location>
        <position position="304"/>
    </location>
    <ligand>
        <name>Fe cation</name>
        <dbReference type="ChEBI" id="CHEBI:24875"/>
    </ligand>
</feature>
<reference key="1">
    <citation type="journal article" date="2003" name="Proc. Natl. Acad. Sci. U.S.A.">
        <title>The complete genome sequence of the Arabidopsis and tomato pathogen Pseudomonas syringae pv. tomato DC3000.</title>
        <authorList>
            <person name="Buell C.R."/>
            <person name="Joardar V."/>
            <person name="Lindeberg M."/>
            <person name="Selengut J."/>
            <person name="Paulsen I.T."/>
            <person name="Gwinn M.L."/>
            <person name="Dodson R.J."/>
            <person name="DeBoy R.T."/>
            <person name="Durkin A.S."/>
            <person name="Kolonay J.F."/>
            <person name="Madupu R."/>
            <person name="Daugherty S.C."/>
            <person name="Brinkac L.M."/>
            <person name="Beanan M.J."/>
            <person name="Haft D.H."/>
            <person name="Nelson W.C."/>
            <person name="Davidsen T.M."/>
            <person name="Zafar N."/>
            <person name="Zhou L."/>
            <person name="Liu J."/>
            <person name="Yuan Q."/>
            <person name="Khouri H.M."/>
            <person name="Fedorova N.B."/>
            <person name="Tran B."/>
            <person name="Russell D."/>
            <person name="Berry K.J."/>
            <person name="Utterback T.R."/>
            <person name="Van Aken S.E."/>
            <person name="Feldblyum T.V."/>
            <person name="D'Ascenzo M."/>
            <person name="Deng W.-L."/>
            <person name="Ramos A.R."/>
            <person name="Alfano J.R."/>
            <person name="Cartinhour S."/>
            <person name="Chatterjee A.K."/>
            <person name="Delaney T.P."/>
            <person name="Lazarowitz S.G."/>
            <person name="Martin G.B."/>
            <person name="Schneider D.J."/>
            <person name="Tang X."/>
            <person name="Bender C.L."/>
            <person name="White O."/>
            <person name="Fraser C.M."/>
            <person name="Collmer A."/>
        </authorList>
    </citation>
    <scope>NUCLEOTIDE SEQUENCE [LARGE SCALE GENOMIC DNA]</scope>
    <source>
        <strain>ATCC BAA-871 / DC3000</strain>
    </source>
</reference>
<organism>
    <name type="scientific">Pseudomonas syringae pv. tomato (strain ATCC BAA-871 / DC3000)</name>
    <dbReference type="NCBI Taxonomy" id="223283"/>
    <lineage>
        <taxon>Bacteria</taxon>
        <taxon>Pseudomonadati</taxon>
        <taxon>Pseudomonadota</taxon>
        <taxon>Gammaproteobacteria</taxon>
        <taxon>Pseudomonadales</taxon>
        <taxon>Pseudomonadaceae</taxon>
        <taxon>Pseudomonas</taxon>
    </lineage>
</organism>
<protein>
    <recommendedName>
        <fullName evidence="1">tRNA N6-adenosine threonylcarbamoyltransferase</fullName>
        <ecNumber evidence="1">2.3.1.234</ecNumber>
    </recommendedName>
    <alternativeName>
        <fullName evidence="1">N6-L-threonylcarbamoyladenine synthase</fullName>
        <shortName evidence="1">t(6)A synthase</shortName>
    </alternativeName>
    <alternativeName>
        <fullName evidence="1">t(6)A37 threonylcarbamoyladenosine biosynthesis protein TsaD</fullName>
    </alternativeName>
    <alternativeName>
        <fullName evidence="1">tRNA threonylcarbamoyladenosine biosynthesis protein TsaD</fullName>
    </alternativeName>
</protein>
<accession>Q88A57</accession>
<comment type="function">
    <text evidence="1">Required for the formation of a threonylcarbamoyl group on adenosine at position 37 (t(6)A37) in tRNAs that read codons beginning with adenine. Is involved in the transfer of the threonylcarbamoyl moiety of threonylcarbamoyl-AMP (TC-AMP) to the N6 group of A37, together with TsaE and TsaB. TsaD likely plays a direct catalytic role in this reaction.</text>
</comment>
<comment type="catalytic activity">
    <reaction evidence="1">
        <text>L-threonylcarbamoyladenylate + adenosine(37) in tRNA = N(6)-L-threonylcarbamoyladenosine(37) in tRNA + AMP + H(+)</text>
        <dbReference type="Rhea" id="RHEA:37059"/>
        <dbReference type="Rhea" id="RHEA-COMP:10162"/>
        <dbReference type="Rhea" id="RHEA-COMP:10163"/>
        <dbReference type="ChEBI" id="CHEBI:15378"/>
        <dbReference type="ChEBI" id="CHEBI:73682"/>
        <dbReference type="ChEBI" id="CHEBI:74411"/>
        <dbReference type="ChEBI" id="CHEBI:74418"/>
        <dbReference type="ChEBI" id="CHEBI:456215"/>
        <dbReference type="EC" id="2.3.1.234"/>
    </reaction>
</comment>
<comment type="cofactor">
    <cofactor evidence="1">
        <name>Fe(2+)</name>
        <dbReference type="ChEBI" id="CHEBI:29033"/>
    </cofactor>
    <text evidence="1">Binds 1 Fe(2+) ion per subunit.</text>
</comment>
<comment type="subcellular location">
    <subcellularLocation>
        <location evidence="1">Cytoplasm</location>
    </subcellularLocation>
</comment>
<comment type="similarity">
    <text evidence="1">Belongs to the KAE1 / TsaD family.</text>
</comment>